<comment type="function">
    <text evidence="1">Heavy-metal-binding protein.</text>
</comment>
<comment type="subunit">
    <text evidence="4">Interacts with ZHD3/HB21, ZHD11/HB29 and ZHD8/HB30.</text>
</comment>
<comment type="similarity">
    <text evidence="7">Belongs to the HIPP family.</text>
</comment>
<comment type="sequence caution" evidence="7">
    <conflict type="erroneous initiation">
        <sequence resource="EMBL-CDS" id="BAD95360"/>
    </conflict>
    <text>Truncated N-terminus.</text>
</comment>
<evidence type="ECO:0000250" key="1">
    <source>
        <dbReference type="UniProtKB" id="Q9LZF1"/>
    </source>
</evidence>
<evidence type="ECO:0000250" key="2">
    <source>
        <dbReference type="UniProtKB" id="Q9SZN7"/>
    </source>
</evidence>
<evidence type="ECO:0000255" key="3">
    <source>
        <dbReference type="PROSITE-ProRule" id="PRU00280"/>
    </source>
</evidence>
<evidence type="ECO:0000269" key="4">
    <source>
    </source>
</evidence>
<evidence type="ECO:0000303" key="5">
    <source>
    </source>
</evidence>
<evidence type="ECO:0000303" key="6">
    <source>
    </source>
</evidence>
<evidence type="ECO:0000305" key="7"/>
<evidence type="ECO:0000312" key="8">
    <source>
        <dbReference type="Araport" id="AT2G18196"/>
    </source>
</evidence>
<evidence type="ECO:0000312" key="9">
    <source>
        <dbReference type="EMBL" id="AC007212"/>
    </source>
</evidence>
<evidence type="ECO:0000312" key="10">
    <source>
        <dbReference type="EMBL" id="AEC06738.1"/>
    </source>
</evidence>
<evidence type="ECO:0000312" key="11">
    <source>
        <dbReference type="Proteomes" id="UP000006548"/>
    </source>
</evidence>
<dbReference type="EMBL" id="AC007212">
    <property type="status" value="NOT_ANNOTATED_CDS"/>
    <property type="molecule type" value="Genomic_DNA"/>
</dbReference>
<dbReference type="EMBL" id="CP002685">
    <property type="protein sequence ID" value="AEC06738.1"/>
    <property type="molecule type" value="Genomic_DNA"/>
</dbReference>
<dbReference type="EMBL" id="AK222206">
    <property type="protein sequence ID" value="BAD95360.1"/>
    <property type="status" value="ALT_INIT"/>
    <property type="molecule type" value="mRNA"/>
</dbReference>
<dbReference type="EMBL" id="BT011716">
    <property type="protein sequence ID" value="AAS49079.1"/>
    <property type="molecule type" value="mRNA"/>
</dbReference>
<dbReference type="RefSeq" id="NP_001324920.1">
    <property type="nucleotide sequence ID" value="NM_001335590.1"/>
</dbReference>
<dbReference type="RefSeq" id="NP_849973.3">
    <property type="nucleotide sequence ID" value="NM_179642.5"/>
</dbReference>
<dbReference type="SMR" id="F4IQG4"/>
<dbReference type="FunCoup" id="F4IQG4">
    <property type="interactions" value="59"/>
</dbReference>
<dbReference type="IntAct" id="F4IQG4">
    <property type="interactions" value="3"/>
</dbReference>
<dbReference type="STRING" id="3702.F4IQG4"/>
<dbReference type="PaxDb" id="3702-AT2G18196.1"/>
<dbReference type="ProteomicsDB" id="230239"/>
<dbReference type="EnsemblPlants" id="AT2G18196.1">
    <property type="protein sequence ID" value="AT2G18196.1"/>
    <property type="gene ID" value="AT2G18196"/>
</dbReference>
<dbReference type="GeneID" id="816334"/>
<dbReference type="Gramene" id="AT2G18196.1">
    <property type="protein sequence ID" value="AT2G18196.1"/>
    <property type="gene ID" value="AT2G18196"/>
</dbReference>
<dbReference type="KEGG" id="ath:AT2G18196"/>
<dbReference type="Araport" id="AT2G18196"/>
<dbReference type="TAIR" id="AT2G18196"/>
<dbReference type="eggNOG" id="KOG1603">
    <property type="taxonomic scope" value="Eukaryota"/>
</dbReference>
<dbReference type="HOGENOM" id="CLU_100095_0_0_1"/>
<dbReference type="InParanoid" id="F4IQG4"/>
<dbReference type="OrthoDB" id="689350at2759"/>
<dbReference type="PRO" id="PR:F4IQG4"/>
<dbReference type="Proteomes" id="UP000006548">
    <property type="component" value="Chromosome 2"/>
</dbReference>
<dbReference type="ExpressionAtlas" id="F4IQG4">
    <property type="expression patterns" value="baseline and differential"/>
</dbReference>
<dbReference type="GO" id="GO:0046872">
    <property type="term" value="F:metal ion binding"/>
    <property type="evidence" value="ECO:0007669"/>
    <property type="project" value="UniProtKB-KW"/>
</dbReference>
<dbReference type="CDD" id="cd00371">
    <property type="entry name" value="HMA"/>
    <property type="match status" value="1"/>
</dbReference>
<dbReference type="Gene3D" id="3.30.70.100">
    <property type="match status" value="1"/>
</dbReference>
<dbReference type="InterPro" id="IPR006121">
    <property type="entry name" value="HMA_dom"/>
</dbReference>
<dbReference type="InterPro" id="IPR036163">
    <property type="entry name" value="HMA_dom_sf"/>
</dbReference>
<dbReference type="PANTHER" id="PTHR22814">
    <property type="entry name" value="COPPER TRANSPORT PROTEIN ATOX1-RELATED"/>
    <property type="match status" value="1"/>
</dbReference>
<dbReference type="PANTHER" id="PTHR22814:SF288">
    <property type="entry name" value="HEAVY METAL-ASSOCIATED ISOPRENYLATED PLANT PROTEIN 30"/>
    <property type="match status" value="1"/>
</dbReference>
<dbReference type="Pfam" id="PF00403">
    <property type="entry name" value="HMA"/>
    <property type="match status" value="1"/>
</dbReference>
<dbReference type="SUPFAM" id="SSF55008">
    <property type="entry name" value="HMA, heavy metal-associated domain"/>
    <property type="match status" value="1"/>
</dbReference>
<dbReference type="PROSITE" id="PS50846">
    <property type="entry name" value="HMA_2"/>
    <property type="match status" value="1"/>
</dbReference>
<proteinExistence type="evidence at protein level"/>
<sequence>MGFGSFISTITYCLFFRYPHKKPKFKSVSHLNHYHTMPMARPLSLQTIDLKVRMCCSGCERVVKHAIYKLRGVDSVEVNLEMERVTVVGYVERKKVLKAVRRAGKRAEFWPYPDMPRYFTSSDHYFKDTTREFRESYNYYRHGYNLSDRHGNIHVTNRGDDKMSNFFNDDNVHACSLM</sequence>
<protein>
    <recommendedName>
        <fullName evidence="5 6">Heavy metal-associated isoprenylated plant protein 30</fullName>
        <shortName evidence="5 6">AtHIP30</shortName>
    </recommendedName>
    <alternativeName>
        <fullName evidence="10">Protein NPCC11</fullName>
    </alternativeName>
</protein>
<reference key="1">
    <citation type="journal article" date="1999" name="Nature">
        <title>Sequence and analysis of chromosome 2 of the plant Arabidopsis thaliana.</title>
        <authorList>
            <person name="Lin X."/>
            <person name="Kaul S."/>
            <person name="Rounsley S.D."/>
            <person name="Shea T.P."/>
            <person name="Benito M.-I."/>
            <person name="Town C.D."/>
            <person name="Fujii C.Y."/>
            <person name="Mason T.M."/>
            <person name="Bowman C.L."/>
            <person name="Barnstead M.E."/>
            <person name="Feldblyum T.V."/>
            <person name="Buell C.R."/>
            <person name="Ketchum K.A."/>
            <person name="Lee J.J."/>
            <person name="Ronning C.M."/>
            <person name="Koo H.L."/>
            <person name="Moffat K.S."/>
            <person name="Cronin L.A."/>
            <person name="Shen M."/>
            <person name="Pai G."/>
            <person name="Van Aken S."/>
            <person name="Umayam L."/>
            <person name="Tallon L.J."/>
            <person name="Gill J.E."/>
            <person name="Adams M.D."/>
            <person name="Carrera A.J."/>
            <person name="Creasy T.H."/>
            <person name="Goodman H.M."/>
            <person name="Somerville C.R."/>
            <person name="Copenhaver G.P."/>
            <person name="Preuss D."/>
            <person name="Nierman W.C."/>
            <person name="White O."/>
            <person name="Eisen J.A."/>
            <person name="Salzberg S.L."/>
            <person name="Fraser C.M."/>
            <person name="Venter J.C."/>
        </authorList>
    </citation>
    <scope>NUCLEOTIDE SEQUENCE [LARGE SCALE GENOMIC DNA]</scope>
    <source>
        <strain>cv. Columbia</strain>
    </source>
</reference>
<reference key="2">
    <citation type="journal article" date="2017" name="Plant J.">
        <title>Araport11: a complete reannotation of the Arabidopsis thaliana reference genome.</title>
        <authorList>
            <person name="Cheng C.Y."/>
            <person name="Krishnakumar V."/>
            <person name="Chan A.P."/>
            <person name="Thibaud-Nissen F."/>
            <person name="Schobel S."/>
            <person name="Town C.D."/>
        </authorList>
    </citation>
    <scope>GENOME REANNOTATION</scope>
    <source>
        <strain>cv. Columbia</strain>
    </source>
</reference>
<reference key="3">
    <citation type="submission" date="2005-03" db="EMBL/GenBank/DDBJ databases">
        <title>Large-scale analysis of RIKEN Arabidopsis full-length (RAFL) cDNAs.</title>
        <authorList>
            <person name="Totoki Y."/>
            <person name="Seki M."/>
            <person name="Ishida J."/>
            <person name="Nakajima M."/>
            <person name="Enju A."/>
            <person name="Kamiya A."/>
            <person name="Narusaka M."/>
            <person name="Shin-i T."/>
            <person name="Nakagawa M."/>
            <person name="Sakamoto N."/>
            <person name="Oishi K."/>
            <person name="Kohara Y."/>
            <person name="Kobayashi M."/>
            <person name="Toyoda A."/>
            <person name="Sakaki Y."/>
            <person name="Sakurai T."/>
            <person name="Iida K."/>
            <person name="Akiyama K."/>
            <person name="Satou M."/>
            <person name="Toyoda T."/>
            <person name="Konagaya A."/>
            <person name="Carninci P."/>
            <person name="Kawai J."/>
            <person name="Hayashizaki Y."/>
            <person name="Shinozaki K."/>
        </authorList>
    </citation>
    <scope>NUCLEOTIDE SEQUENCE [LARGE SCALE MRNA] OF 4-178</scope>
    <source>
        <strain>cv. Columbia</strain>
    </source>
</reference>
<reference key="4">
    <citation type="submission" date="2004-03" db="EMBL/GenBank/DDBJ databases">
        <title>Arabidopsis ORF clones.</title>
        <authorList>
            <person name="Cheuk R."/>
            <person name="Chen H."/>
            <person name="Kim C.J."/>
            <person name="Shinn P."/>
            <person name="Carninci P."/>
            <person name="Hayashizaki Y."/>
            <person name="Ishida J."/>
            <person name="Kamiya A."/>
            <person name="Kawai J."/>
            <person name="Narusaka M."/>
            <person name="Sakurai T."/>
            <person name="Satou M."/>
            <person name="Seki M."/>
            <person name="Shinozaki K."/>
            <person name="Ecker J.R."/>
        </authorList>
    </citation>
    <scope>NUCLEOTIDE SEQUENCE [LARGE SCALE MRNA] OF 54-178</scope>
    <source>
        <strain>cv. Columbia</strain>
    </source>
</reference>
<reference key="5">
    <citation type="journal article" date="2009" name="Plant Mol. Biol.">
        <title>Stress induced and nuclear localized HIPP26 from Arabidopsis thaliana interacts via its heavy metal associated domain with the drought stress related zinc finger transcription factor ATHB29.</title>
        <authorList>
            <person name="Barth O."/>
            <person name="Vogt S."/>
            <person name="Uhlemann R."/>
            <person name="Zschiesche W."/>
            <person name="Humbeck K."/>
        </authorList>
    </citation>
    <scope>INTERACTION WITH ZHD3/HB21; ZHD11/HB29 AND ZHD8/HB30</scope>
    <source>
        <strain>cv. Columbia</strain>
    </source>
</reference>
<reference key="6">
    <citation type="journal article" date="2010" name="Metallomics">
        <title>Metallochaperone-like genes in Arabidopsis thaliana.</title>
        <authorList>
            <person name="Tehseen M."/>
            <person name="Cairns N."/>
            <person name="Sherson S."/>
            <person name="Cobbett C.S."/>
        </authorList>
    </citation>
    <scope>GENE FAMILY</scope>
    <scope>NOMENCLATURE</scope>
</reference>
<reference key="7">
    <citation type="journal article" date="2013" name="FEBS J.">
        <title>Heavy metal-associated isoprenylated plant protein (HIPP): characterization of a family of proteins exclusive to plants.</title>
        <authorList>
            <person name="de Abreu-Neto J.B."/>
            <person name="Turchetto-Zolet A.C."/>
            <person name="de Oliveira L.F."/>
            <person name="Zanettini M.H."/>
            <person name="Margis-Pinheiro M."/>
        </authorList>
    </citation>
    <scope>GENE FAMILY</scope>
    <scope>NOMENCLATURE</scope>
</reference>
<gene>
    <name evidence="5 6" type="primary">HIPP30</name>
    <name evidence="8" type="ordered locus">At2g18196</name>
    <name evidence="9" type="ORF">F8D23</name>
</gene>
<keyword id="KW-0449">Lipoprotein</keyword>
<keyword id="KW-0479">Metal-binding</keyword>
<keyword id="KW-0488">Methylation</keyword>
<keyword id="KW-0636">Prenylation</keyword>
<keyword id="KW-1185">Reference proteome</keyword>
<name>HIP30_ARATH</name>
<organism evidence="11">
    <name type="scientific">Arabidopsis thaliana</name>
    <name type="common">Mouse-ear cress</name>
    <dbReference type="NCBI Taxonomy" id="3702"/>
    <lineage>
        <taxon>Eukaryota</taxon>
        <taxon>Viridiplantae</taxon>
        <taxon>Streptophyta</taxon>
        <taxon>Embryophyta</taxon>
        <taxon>Tracheophyta</taxon>
        <taxon>Spermatophyta</taxon>
        <taxon>Magnoliopsida</taxon>
        <taxon>eudicotyledons</taxon>
        <taxon>Gunneridae</taxon>
        <taxon>Pentapetalae</taxon>
        <taxon>rosids</taxon>
        <taxon>malvids</taxon>
        <taxon>Brassicales</taxon>
        <taxon>Brassicaceae</taxon>
        <taxon>Camelineae</taxon>
        <taxon>Arabidopsis</taxon>
    </lineage>
</organism>
<accession>F4IQG4</accession>
<accession>Q56W41</accession>
<accession>Q6NME4</accession>
<feature type="chain" id="PRO_0000437837" description="Heavy metal-associated isoprenylated plant protein 30">
    <location>
        <begin position="1"/>
        <end position="175"/>
    </location>
</feature>
<feature type="propeptide" id="PRO_0000437838" description="Removed in mature form" evidence="7">
    <location>
        <begin position="176"/>
        <end position="178"/>
    </location>
</feature>
<feature type="domain" description="HMA" evidence="3">
    <location>
        <begin position="45"/>
        <end position="108"/>
    </location>
</feature>
<feature type="binding site" evidence="3">
    <location>
        <position position="56"/>
    </location>
    <ligand>
        <name>a metal cation</name>
        <dbReference type="ChEBI" id="CHEBI:25213"/>
    </ligand>
</feature>
<feature type="binding site" evidence="3">
    <location>
        <position position="59"/>
    </location>
    <ligand>
        <name>a metal cation</name>
        <dbReference type="ChEBI" id="CHEBI:25213"/>
    </ligand>
</feature>
<feature type="modified residue" description="Cysteine methyl ester" evidence="2">
    <location>
        <position position="175"/>
    </location>
</feature>
<feature type="lipid moiety-binding region" description="S-farnesyl cysteine" evidence="2">
    <location>
        <position position="175"/>
    </location>
</feature>